<name>HSLV_RICB8</name>
<keyword id="KW-0021">Allosteric enzyme</keyword>
<keyword id="KW-0963">Cytoplasm</keyword>
<keyword id="KW-0378">Hydrolase</keyword>
<keyword id="KW-0479">Metal-binding</keyword>
<keyword id="KW-0645">Protease</keyword>
<keyword id="KW-0915">Sodium</keyword>
<keyword id="KW-0888">Threonine protease</keyword>
<evidence type="ECO:0000255" key="1">
    <source>
        <dbReference type="HAMAP-Rule" id="MF_00248"/>
    </source>
</evidence>
<sequence>MSDNLALHGTTILCLKKNEEIIIAADGQVSHGNTVLKSTARKLRTIANNKIIAGFAGSTADGLALFEKLEVKIEQHKHNLLRSAVELAKDWRSDKYLRRLEAMMIVADRNHILILTGNGDVVEPENNVAAIGSGGLFALSAARALMSYDNPLTAEEIALKSMNIAADLCVFSNHNIITEKVV</sequence>
<protein>
    <recommendedName>
        <fullName evidence="1">ATP-dependent protease subunit HslV</fullName>
        <ecNumber evidence="1">3.4.25.2</ecNumber>
    </recommendedName>
</protein>
<gene>
    <name evidence="1" type="primary">hslV</name>
    <name type="ordered locus">A1I_05215</name>
</gene>
<dbReference type="EC" id="3.4.25.2" evidence="1"/>
<dbReference type="EMBL" id="CP000849">
    <property type="protein sequence ID" value="ABV79370.1"/>
    <property type="molecule type" value="Genomic_DNA"/>
</dbReference>
<dbReference type="RefSeq" id="WP_011477485.1">
    <property type="nucleotide sequence ID" value="NC_009883.1"/>
</dbReference>
<dbReference type="SMR" id="A8GWX0"/>
<dbReference type="KEGG" id="rbo:A1I_05215"/>
<dbReference type="HOGENOM" id="CLU_093872_1_0_5"/>
<dbReference type="GO" id="GO:0009376">
    <property type="term" value="C:HslUV protease complex"/>
    <property type="evidence" value="ECO:0007669"/>
    <property type="project" value="UniProtKB-UniRule"/>
</dbReference>
<dbReference type="GO" id="GO:0005839">
    <property type="term" value="C:proteasome core complex"/>
    <property type="evidence" value="ECO:0007669"/>
    <property type="project" value="InterPro"/>
</dbReference>
<dbReference type="GO" id="GO:0046872">
    <property type="term" value="F:metal ion binding"/>
    <property type="evidence" value="ECO:0007669"/>
    <property type="project" value="UniProtKB-KW"/>
</dbReference>
<dbReference type="GO" id="GO:0004298">
    <property type="term" value="F:threonine-type endopeptidase activity"/>
    <property type="evidence" value="ECO:0007669"/>
    <property type="project" value="UniProtKB-KW"/>
</dbReference>
<dbReference type="GO" id="GO:0051603">
    <property type="term" value="P:proteolysis involved in protein catabolic process"/>
    <property type="evidence" value="ECO:0007669"/>
    <property type="project" value="InterPro"/>
</dbReference>
<dbReference type="CDD" id="cd01913">
    <property type="entry name" value="protease_HslV"/>
    <property type="match status" value="1"/>
</dbReference>
<dbReference type="Gene3D" id="3.60.20.10">
    <property type="entry name" value="Glutamine Phosphoribosylpyrophosphate, subunit 1, domain 1"/>
    <property type="match status" value="1"/>
</dbReference>
<dbReference type="HAMAP" id="MF_00248">
    <property type="entry name" value="HslV"/>
    <property type="match status" value="1"/>
</dbReference>
<dbReference type="InterPro" id="IPR022281">
    <property type="entry name" value="ATP-dep_Prtase_HsIV_su"/>
</dbReference>
<dbReference type="InterPro" id="IPR029055">
    <property type="entry name" value="Ntn_hydrolases_N"/>
</dbReference>
<dbReference type="InterPro" id="IPR001353">
    <property type="entry name" value="Proteasome_sua/b"/>
</dbReference>
<dbReference type="InterPro" id="IPR023333">
    <property type="entry name" value="Proteasome_suB-type"/>
</dbReference>
<dbReference type="NCBIfam" id="TIGR03692">
    <property type="entry name" value="ATP_dep_HslV"/>
    <property type="match status" value="1"/>
</dbReference>
<dbReference type="NCBIfam" id="NF003964">
    <property type="entry name" value="PRK05456.1"/>
    <property type="match status" value="1"/>
</dbReference>
<dbReference type="PANTHER" id="PTHR32194:SF0">
    <property type="entry name" value="ATP-DEPENDENT PROTEASE SUBUNIT HSLV"/>
    <property type="match status" value="1"/>
</dbReference>
<dbReference type="PANTHER" id="PTHR32194">
    <property type="entry name" value="METALLOPROTEASE TLDD"/>
    <property type="match status" value="1"/>
</dbReference>
<dbReference type="Pfam" id="PF00227">
    <property type="entry name" value="Proteasome"/>
    <property type="match status" value="1"/>
</dbReference>
<dbReference type="PIRSF" id="PIRSF039093">
    <property type="entry name" value="HslV"/>
    <property type="match status" value="1"/>
</dbReference>
<dbReference type="SUPFAM" id="SSF56235">
    <property type="entry name" value="N-terminal nucleophile aminohydrolases (Ntn hydrolases)"/>
    <property type="match status" value="1"/>
</dbReference>
<dbReference type="PROSITE" id="PS51476">
    <property type="entry name" value="PROTEASOME_BETA_2"/>
    <property type="match status" value="1"/>
</dbReference>
<reference key="1">
    <citation type="submission" date="2007-09" db="EMBL/GenBank/DDBJ databases">
        <title>Complete genome sequencing of Rickettsia bellii.</title>
        <authorList>
            <person name="Madan A."/>
            <person name="Lee H."/>
            <person name="Madan A."/>
            <person name="Yoon J.-G."/>
            <person name="Ryu G.-Y."/>
            <person name="Dasch G."/>
            <person name="Ereemeva M."/>
        </authorList>
    </citation>
    <scope>NUCLEOTIDE SEQUENCE [LARGE SCALE GENOMIC DNA]</scope>
    <source>
        <strain>OSU 85-389</strain>
    </source>
</reference>
<proteinExistence type="inferred from homology"/>
<comment type="function">
    <text evidence="1">Protease subunit of a proteasome-like degradation complex believed to be a general protein degrading machinery.</text>
</comment>
<comment type="catalytic activity">
    <reaction evidence="1">
        <text>ATP-dependent cleavage of peptide bonds with broad specificity.</text>
        <dbReference type="EC" id="3.4.25.2"/>
    </reaction>
</comment>
<comment type="activity regulation">
    <text evidence="1">Allosterically activated by HslU binding.</text>
</comment>
<comment type="subunit">
    <text evidence="1">A double ring-shaped homohexamer of HslV is capped on each side by a ring-shaped HslU homohexamer. The assembly of the HslU/HslV complex is dependent on binding of ATP.</text>
</comment>
<comment type="subcellular location">
    <subcellularLocation>
        <location evidence="1">Cytoplasm</location>
    </subcellularLocation>
</comment>
<comment type="similarity">
    <text evidence="1">Belongs to the peptidase T1B family. HslV subfamily.</text>
</comment>
<accession>A8GWX0</accession>
<feature type="chain" id="PRO_1000012658" description="ATP-dependent protease subunit HslV">
    <location>
        <begin position="1"/>
        <end position="182"/>
    </location>
</feature>
<feature type="active site" evidence="1">
    <location>
        <position position="10"/>
    </location>
</feature>
<feature type="binding site" evidence="1">
    <location>
        <position position="166"/>
    </location>
    <ligand>
        <name>Na(+)</name>
        <dbReference type="ChEBI" id="CHEBI:29101"/>
    </ligand>
</feature>
<feature type="binding site" evidence="1">
    <location>
        <position position="169"/>
    </location>
    <ligand>
        <name>Na(+)</name>
        <dbReference type="ChEBI" id="CHEBI:29101"/>
    </ligand>
</feature>
<feature type="binding site" evidence="1">
    <location>
        <position position="172"/>
    </location>
    <ligand>
        <name>Na(+)</name>
        <dbReference type="ChEBI" id="CHEBI:29101"/>
    </ligand>
</feature>
<organism>
    <name type="scientific">Rickettsia bellii (strain OSU 85-389)</name>
    <dbReference type="NCBI Taxonomy" id="391896"/>
    <lineage>
        <taxon>Bacteria</taxon>
        <taxon>Pseudomonadati</taxon>
        <taxon>Pseudomonadota</taxon>
        <taxon>Alphaproteobacteria</taxon>
        <taxon>Rickettsiales</taxon>
        <taxon>Rickettsiaceae</taxon>
        <taxon>Rickettsieae</taxon>
        <taxon>Rickettsia</taxon>
        <taxon>belli group</taxon>
    </lineage>
</organism>